<protein>
    <recommendedName>
        <fullName evidence="1">Protoheme IX farnesyltransferase</fullName>
        <ecNumber evidence="1">2.5.1.141</ecNumber>
    </recommendedName>
    <alternativeName>
        <fullName evidence="1">Heme B farnesyltransferase</fullName>
    </alternativeName>
    <alternativeName>
        <fullName evidence="1">Heme O synthase</fullName>
    </alternativeName>
</protein>
<reference key="1">
    <citation type="submission" date="2006-03" db="EMBL/GenBank/DDBJ databases">
        <title>Complete genome sequence of Francisella tularensis LVS (Live Vaccine Strain).</title>
        <authorList>
            <person name="Chain P."/>
            <person name="Larimer F."/>
            <person name="Land M."/>
            <person name="Stilwagen S."/>
            <person name="Larsson P."/>
            <person name="Bearden S."/>
            <person name="Chu M."/>
            <person name="Oyston P."/>
            <person name="Forsman M."/>
            <person name="Andersson S."/>
            <person name="Lindler L."/>
            <person name="Titball R."/>
            <person name="Garcia E."/>
        </authorList>
    </citation>
    <scope>NUCLEOTIDE SEQUENCE [LARGE SCALE GENOMIC DNA]</scope>
    <source>
        <strain>LVS</strain>
    </source>
</reference>
<organism>
    <name type="scientific">Francisella tularensis subsp. holarctica (strain LVS)</name>
    <dbReference type="NCBI Taxonomy" id="376619"/>
    <lineage>
        <taxon>Bacteria</taxon>
        <taxon>Pseudomonadati</taxon>
        <taxon>Pseudomonadota</taxon>
        <taxon>Gammaproteobacteria</taxon>
        <taxon>Thiotrichales</taxon>
        <taxon>Francisellaceae</taxon>
        <taxon>Francisella</taxon>
    </lineage>
</organism>
<proteinExistence type="inferred from homology"/>
<gene>
    <name evidence="1" type="primary">cyoE</name>
    <name type="ordered locus">FTL_0195</name>
</gene>
<sequence length="282" mass="31543">MYFKRYLQLAKPGIIFGNLITLTGGFLLATHREIGFEYLPLFVYVMIGVALMIAAGCVFNNIYDQDIDSSMTRTQNRPLVTGDISVIQATIYGTILLILSCLVLYYLVNLLTLWIIIIGFIVYVGIYTVSKRLTIHATVLGGISGAIPPVAGYTAVVNILDYNALALFLILFFWQIPHSYAIAMLYIDDYKKVKLPMLPIVKGIAYTKKIMLFYLALFVVSCALPAVLGSADLFSFIVCMLVALFWMYKSIQSYRTDTDRVFAKTVFKFSIIVITAICLTMG</sequence>
<evidence type="ECO:0000255" key="1">
    <source>
        <dbReference type="HAMAP-Rule" id="MF_00154"/>
    </source>
</evidence>
<dbReference type="EC" id="2.5.1.141" evidence="1"/>
<dbReference type="EMBL" id="AM233362">
    <property type="protein sequence ID" value="CAJ78636.1"/>
    <property type="molecule type" value="Genomic_DNA"/>
</dbReference>
<dbReference type="RefSeq" id="WP_003014236.1">
    <property type="nucleotide sequence ID" value="NZ_CP009694.1"/>
</dbReference>
<dbReference type="SMR" id="Q2A5L1"/>
<dbReference type="KEGG" id="ftl:FTL_0195"/>
<dbReference type="UniPathway" id="UPA00834">
    <property type="reaction ID" value="UER00712"/>
</dbReference>
<dbReference type="Proteomes" id="UP000001944">
    <property type="component" value="Chromosome"/>
</dbReference>
<dbReference type="GO" id="GO:0005886">
    <property type="term" value="C:plasma membrane"/>
    <property type="evidence" value="ECO:0007669"/>
    <property type="project" value="UniProtKB-SubCell"/>
</dbReference>
<dbReference type="GO" id="GO:0008495">
    <property type="term" value="F:protoheme IX farnesyltransferase activity"/>
    <property type="evidence" value="ECO:0007669"/>
    <property type="project" value="UniProtKB-UniRule"/>
</dbReference>
<dbReference type="GO" id="GO:0048034">
    <property type="term" value="P:heme O biosynthetic process"/>
    <property type="evidence" value="ECO:0007669"/>
    <property type="project" value="UniProtKB-UniRule"/>
</dbReference>
<dbReference type="CDD" id="cd13957">
    <property type="entry name" value="PT_UbiA_Cox10"/>
    <property type="match status" value="1"/>
</dbReference>
<dbReference type="Gene3D" id="1.10.357.140">
    <property type="entry name" value="UbiA prenyltransferase"/>
    <property type="match status" value="1"/>
</dbReference>
<dbReference type="HAMAP" id="MF_00154">
    <property type="entry name" value="CyoE_CtaB"/>
    <property type="match status" value="1"/>
</dbReference>
<dbReference type="InterPro" id="IPR006369">
    <property type="entry name" value="Protohaem_IX_farnesylTrfase"/>
</dbReference>
<dbReference type="InterPro" id="IPR000537">
    <property type="entry name" value="UbiA_prenyltransferase"/>
</dbReference>
<dbReference type="InterPro" id="IPR030470">
    <property type="entry name" value="UbiA_prenylTrfase_CS"/>
</dbReference>
<dbReference type="InterPro" id="IPR044878">
    <property type="entry name" value="UbiA_sf"/>
</dbReference>
<dbReference type="NCBIfam" id="TIGR01473">
    <property type="entry name" value="cyoE_ctaB"/>
    <property type="match status" value="1"/>
</dbReference>
<dbReference type="NCBIfam" id="NF003348">
    <property type="entry name" value="PRK04375.1-1"/>
    <property type="match status" value="1"/>
</dbReference>
<dbReference type="PANTHER" id="PTHR43448">
    <property type="entry name" value="PROTOHEME IX FARNESYLTRANSFERASE, MITOCHONDRIAL"/>
    <property type="match status" value="1"/>
</dbReference>
<dbReference type="PANTHER" id="PTHR43448:SF2">
    <property type="entry name" value="PROTOHEME IX FARNESYLTRANSFERASE, MITOCHONDRIAL"/>
    <property type="match status" value="1"/>
</dbReference>
<dbReference type="Pfam" id="PF01040">
    <property type="entry name" value="UbiA"/>
    <property type="match status" value="1"/>
</dbReference>
<dbReference type="PROSITE" id="PS00943">
    <property type="entry name" value="UBIA"/>
    <property type="match status" value="1"/>
</dbReference>
<accession>Q2A5L1</accession>
<comment type="function">
    <text evidence="1">Converts heme B (protoheme IX) to heme O by substitution of the vinyl group on carbon 2 of heme B porphyrin ring with a hydroxyethyl farnesyl side group.</text>
</comment>
<comment type="catalytic activity">
    <reaction evidence="1">
        <text>heme b + (2E,6E)-farnesyl diphosphate + H2O = Fe(II)-heme o + diphosphate</text>
        <dbReference type="Rhea" id="RHEA:28070"/>
        <dbReference type="ChEBI" id="CHEBI:15377"/>
        <dbReference type="ChEBI" id="CHEBI:33019"/>
        <dbReference type="ChEBI" id="CHEBI:60344"/>
        <dbReference type="ChEBI" id="CHEBI:60530"/>
        <dbReference type="ChEBI" id="CHEBI:175763"/>
        <dbReference type="EC" id="2.5.1.141"/>
    </reaction>
</comment>
<comment type="pathway">
    <text evidence="1">Porphyrin-containing compound metabolism; heme O biosynthesis; heme O from protoheme: step 1/1.</text>
</comment>
<comment type="subcellular location">
    <subcellularLocation>
        <location evidence="1">Cell inner membrane</location>
        <topology evidence="1">Multi-pass membrane protein</topology>
    </subcellularLocation>
</comment>
<comment type="miscellaneous">
    <text evidence="1">Carbon 2 of the heme B porphyrin ring is defined according to the Fischer nomenclature.</text>
</comment>
<comment type="similarity">
    <text evidence="1">Belongs to the UbiA prenyltransferase family. Protoheme IX farnesyltransferase subfamily.</text>
</comment>
<feature type="chain" id="PRO_0000326896" description="Protoheme IX farnesyltransferase">
    <location>
        <begin position="1"/>
        <end position="282"/>
    </location>
</feature>
<feature type="transmembrane region" description="Helical" evidence="1">
    <location>
        <begin position="9"/>
        <end position="29"/>
    </location>
</feature>
<feature type="transmembrane region" description="Helical" evidence="1">
    <location>
        <begin position="39"/>
        <end position="59"/>
    </location>
</feature>
<feature type="transmembrane region" description="Helical" evidence="1">
    <location>
        <begin position="79"/>
        <end position="99"/>
    </location>
</feature>
<feature type="transmembrane region" description="Helical" evidence="1">
    <location>
        <begin position="102"/>
        <end position="122"/>
    </location>
</feature>
<feature type="transmembrane region" description="Helical" evidence="1">
    <location>
        <begin position="139"/>
        <end position="159"/>
    </location>
</feature>
<feature type="transmembrane region" description="Helical" evidence="1">
    <location>
        <begin position="165"/>
        <end position="185"/>
    </location>
</feature>
<feature type="transmembrane region" description="Helical" evidence="1">
    <location>
        <begin position="210"/>
        <end position="230"/>
    </location>
</feature>
<feature type="transmembrane region" description="Helical" evidence="1">
    <location>
        <begin position="231"/>
        <end position="251"/>
    </location>
</feature>
<feature type="transmembrane region" description="Helical" evidence="1">
    <location>
        <begin position="261"/>
        <end position="281"/>
    </location>
</feature>
<keyword id="KW-0997">Cell inner membrane</keyword>
<keyword id="KW-1003">Cell membrane</keyword>
<keyword id="KW-0350">Heme biosynthesis</keyword>
<keyword id="KW-0472">Membrane</keyword>
<keyword id="KW-1185">Reference proteome</keyword>
<keyword id="KW-0808">Transferase</keyword>
<keyword id="KW-0812">Transmembrane</keyword>
<keyword id="KW-1133">Transmembrane helix</keyword>
<name>CYOE_FRATH</name>